<gene>
    <name type="primary">Epb41l5</name>
    <name type="synonym">Epb4.1l5</name>
</gene>
<proteinExistence type="evidence at protein level"/>
<accession>Q5FVG2</accession>
<protein>
    <recommendedName>
        <fullName>Band 4.1-like protein 5</fullName>
    </recommendedName>
    <alternativeName>
        <fullName evidence="8">Erythrocyte membrane protein band 4.1-like 5</fullName>
    </alternativeName>
</protein>
<organism>
    <name type="scientific">Rattus norvegicus</name>
    <name type="common">Rat</name>
    <dbReference type="NCBI Taxonomy" id="10116"/>
    <lineage>
        <taxon>Eukaryota</taxon>
        <taxon>Metazoa</taxon>
        <taxon>Chordata</taxon>
        <taxon>Craniata</taxon>
        <taxon>Vertebrata</taxon>
        <taxon>Euteleostomi</taxon>
        <taxon>Mammalia</taxon>
        <taxon>Eutheria</taxon>
        <taxon>Euarchontoglires</taxon>
        <taxon>Glires</taxon>
        <taxon>Rodentia</taxon>
        <taxon>Myomorpha</taxon>
        <taxon>Muroidea</taxon>
        <taxon>Muridae</taxon>
        <taxon>Murinae</taxon>
        <taxon>Rattus</taxon>
    </lineage>
</organism>
<sequence>MLSFLRRTLGRRSMRKHAEKERLREAQRAATHIPAAGDAKSVITCRVSLLDGTDVSVDLPKKAKGQELFDQIMYHLDLIESDYFGLRFMDSAQVAHWLDGTKSIKKQVKIGSPYCLHLRVKFYSSEPNNLREELTRYLFVLQLKQDILSGKLECPFDTAVQLAAYNLQAELGDYDLAEHSPELVSEFRFVPTQTEEMELAIFEKWKEYRGQTPAQAETNYLNKAKWLEMYGVDMHVVKARDGNDYSLGLTPTGVLVFEGETKIGLFFWPKITRLDFKKNKLTLVVVEDDDQGKEQEHTFVFRLDHPKACKHLWKCAVEHHAFFRLRGPVQKGSHRSGFIRLGSRFRYSGKTEYQTTKTNKARRSTSFERRPSKRYSRRTLQVKGEVWPCSTGSVHNASAQNNDSQQAWGMKSPVPVTSFSSSGPVLVETENLPQNSAADQHDRKRLPLSIDLLNSPDLLETTIGDVTRPSDTSAPFPAPDDVNVATMSHELEELRADCETLKDDTEKLKQLNTEQNILPSLRPAIDINVNSQEEVVKLTEKCLNNAIESPGLNTVRVPPDFKSNILKAQVEAVHKATREDSLLTHKNASVQDAATNSTVFNENNMPLCKDSLTPVHGTTADSDSVLKDATDELDALLLSLTENLMDHTVTPQVSSSSMITPRWIIPQNSTISNGLAGYGVSLTGTEGCNQKDGFSLISPPAPFLVDAVTSSAPPLPGDSALKQKCLLTTEL</sequence>
<reference key="1">
    <citation type="journal article" date="2004" name="Nature">
        <title>Genome sequence of the Brown Norway rat yields insights into mammalian evolution.</title>
        <authorList>
            <person name="Gibbs R.A."/>
            <person name="Weinstock G.M."/>
            <person name="Metzker M.L."/>
            <person name="Muzny D.M."/>
            <person name="Sodergren E.J."/>
            <person name="Scherer S."/>
            <person name="Scott G."/>
            <person name="Steffen D."/>
            <person name="Worley K.C."/>
            <person name="Burch P.E."/>
            <person name="Okwuonu G."/>
            <person name="Hines S."/>
            <person name="Lewis L."/>
            <person name="Deramo C."/>
            <person name="Delgado O."/>
            <person name="Dugan-Rocha S."/>
            <person name="Miner G."/>
            <person name="Morgan M."/>
            <person name="Hawes A."/>
            <person name="Gill R."/>
            <person name="Holt R.A."/>
            <person name="Adams M.D."/>
            <person name="Amanatides P.G."/>
            <person name="Baden-Tillson H."/>
            <person name="Barnstead M."/>
            <person name="Chin S."/>
            <person name="Evans C.A."/>
            <person name="Ferriera S."/>
            <person name="Fosler C."/>
            <person name="Glodek A."/>
            <person name="Gu Z."/>
            <person name="Jennings D."/>
            <person name="Kraft C.L."/>
            <person name="Nguyen T."/>
            <person name="Pfannkoch C.M."/>
            <person name="Sitter C."/>
            <person name="Sutton G.G."/>
            <person name="Venter J.C."/>
            <person name="Woodage T."/>
            <person name="Smith D."/>
            <person name="Lee H.-M."/>
            <person name="Gustafson E."/>
            <person name="Cahill P."/>
            <person name="Kana A."/>
            <person name="Doucette-Stamm L."/>
            <person name="Weinstock K."/>
            <person name="Fechtel K."/>
            <person name="Weiss R.B."/>
            <person name="Dunn D.M."/>
            <person name="Green E.D."/>
            <person name="Blakesley R.W."/>
            <person name="Bouffard G.G."/>
            <person name="De Jong P.J."/>
            <person name="Osoegawa K."/>
            <person name="Zhu B."/>
            <person name="Marra M."/>
            <person name="Schein J."/>
            <person name="Bosdet I."/>
            <person name="Fjell C."/>
            <person name="Jones S."/>
            <person name="Krzywinski M."/>
            <person name="Mathewson C."/>
            <person name="Siddiqui A."/>
            <person name="Wye N."/>
            <person name="McPherson J."/>
            <person name="Zhao S."/>
            <person name="Fraser C.M."/>
            <person name="Shetty J."/>
            <person name="Shatsman S."/>
            <person name="Geer K."/>
            <person name="Chen Y."/>
            <person name="Abramzon S."/>
            <person name="Nierman W.C."/>
            <person name="Havlak P.H."/>
            <person name="Chen R."/>
            <person name="Durbin K.J."/>
            <person name="Egan A."/>
            <person name="Ren Y."/>
            <person name="Song X.-Z."/>
            <person name="Li B."/>
            <person name="Liu Y."/>
            <person name="Qin X."/>
            <person name="Cawley S."/>
            <person name="Cooney A.J."/>
            <person name="D'Souza L.M."/>
            <person name="Martin K."/>
            <person name="Wu J.Q."/>
            <person name="Gonzalez-Garay M.L."/>
            <person name="Jackson A.R."/>
            <person name="Kalafus K.J."/>
            <person name="McLeod M.P."/>
            <person name="Milosavljevic A."/>
            <person name="Virk D."/>
            <person name="Volkov A."/>
            <person name="Wheeler D.A."/>
            <person name="Zhang Z."/>
            <person name="Bailey J.A."/>
            <person name="Eichler E.E."/>
            <person name="Tuzun E."/>
            <person name="Birney E."/>
            <person name="Mongin E."/>
            <person name="Ureta-Vidal A."/>
            <person name="Woodwark C."/>
            <person name="Zdobnov E."/>
            <person name="Bork P."/>
            <person name="Suyama M."/>
            <person name="Torrents D."/>
            <person name="Alexandersson M."/>
            <person name="Trask B.J."/>
            <person name="Young J.M."/>
            <person name="Huang H."/>
            <person name="Wang H."/>
            <person name="Xing H."/>
            <person name="Daniels S."/>
            <person name="Gietzen D."/>
            <person name="Schmidt J."/>
            <person name="Stevens K."/>
            <person name="Vitt U."/>
            <person name="Wingrove J."/>
            <person name="Camara F."/>
            <person name="Mar Alba M."/>
            <person name="Abril J.F."/>
            <person name="Guigo R."/>
            <person name="Smit A."/>
            <person name="Dubchak I."/>
            <person name="Rubin E.M."/>
            <person name="Couronne O."/>
            <person name="Poliakov A."/>
            <person name="Huebner N."/>
            <person name="Ganten D."/>
            <person name="Goesele C."/>
            <person name="Hummel O."/>
            <person name="Kreitler T."/>
            <person name="Lee Y.-A."/>
            <person name="Monti J."/>
            <person name="Schulz H."/>
            <person name="Zimdahl H."/>
            <person name="Himmelbauer H."/>
            <person name="Lehrach H."/>
            <person name="Jacob H.J."/>
            <person name="Bromberg S."/>
            <person name="Gullings-Handley J."/>
            <person name="Jensen-Seaman M.I."/>
            <person name="Kwitek A.E."/>
            <person name="Lazar J."/>
            <person name="Pasko D."/>
            <person name="Tonellato P.J."/>
            <person name="Twigger S."/>
            <person name="Ponting C.P."/>
            <person name="Duarte J.M."/>
            <person name="Rice S."/>
            <person name="Goodstadt L."/>
            <person name="Beatson S.A."/>
            <person name="Emes R.D."/>
            <person name="Winter E.E."/>
            <person name="Webber C."/>
            <person name="Brandt P."/>
            <person name="Nyakatura G."/>
            <person name="Adetobi M."/>
            <person name="Chiaromonte F."/>
            <person name="Elnitski L."/>
            <person name="Eswara P."/>
            <person name="Hardison R.C."/>
            <person name="Hou M."/>
            <person name="Kolbe D."/>
            <person name="Makova K."/>
            <person name="Miller W."/>
            <person name="Nekrutenko A."/>
            <person name="Riemer C."/>
            <person name="Schwartz S."/>
            <person name="Taylor J."/>
            <person name="Yang S."/>
            <person name="Zhang Y."/>
            <person name="Lindpaintner K."/>
            <person name="Andrews T.D."/>
            <person name="Caccamo M."/>
            <person name="Clamp M."/>
            <person name="Clarke L."/>
            <person name="Curwen V."/>
            <person name="Durbin R.M."/>
            <person name="Eyras E."/>
            <person name="Searle S.M."/>
            <person name="Cooper G.M."/>
            <person name="Batzoglou S."/>
            <person name="Brudno M."/>
            <person name="Sidow A."/>
            <person name="Stone E.A."/>
            <person name="Payseur B.A."/>
            <person name="Bourque G."/>
            <person name="Lopez-Otin C."/>
            <person name="Puente X.S."/>
            <person name="Chakrabarti K."/>
            <person name="Chatterji S."/>
            <person name="Dewey C."/>
            <person name="Pachter L."/>
            <person name="Bray N."/>
            <person name="Yap V.B."/>
            <person name="Caspi A."/>
            <person name="Tesler G."/>
            <person name="Pevzner P.A."/>
            <person name="Haussler D."/>
            <person name="Roskin K.M."/>
            <person name="Baertsch R."/>
            <person name="Clawson H."/>
            <person name="Furey T.S."/>
            <person name="Hinrichs A.S."/>
            <person name="Karolchik D."/>
            <person name="Kent W.J."/>
            <person name="Rosenbloom K.R."/>
            <person name="Trumbower H."/>
            <person name="Weirauch M."/>
            <person name="Cooper D.N."/>
            <person name="Stenson P.D."/>
            <person name="Ma B."/>
            <person name="Brent M."/>
            <person name="Arumugam M."/>
            <person name="Shteynberg D."/>
            <person name="Copley R.R."/>
            <person name="Taylor M.S."/>
            <person name="Riethman H."/>
            <person name="Mudunuri U."/>
            <person name="Peterson J."/>
            <person name="Guyer M."/>
            <person name="Felsenfeld A."/>
            <person name="Old S."/>
            <person name="Mockrin S."/>
            <person name="Collins F.S."/>
        </authorList>
    </citation>
    <scope>NUCLEOTIDE SEQUENCE [LARGE SCALE GENOMIC DNA]</scope>
    <source>
        <strain>Brown Norway</strain>
    </source>
</reference>
<reference key="2">
    <citation type="journal article" date="2004" name="Genome Res.">
        <title>The status, quality, and expansion of the NIH full-length cDNA project: the Mammalian Gene Collection (MGC).</title>
        <authorList>
            <consortium name="The MGC Project Team"/>
        </authorList>
    </citation>
    <scope>NUCLEOTIDE SEQUENCE [LARGE SCALE MRNA] (ISOFORM 2)</scope>
    <source>
        <tissue>Liver</tissue>
    </source>
</reference>
<reference key="3">
    <citation type="journal article" date="2007" name="Exp. Cell Res.">
        <title>FERM protein EPB41L5 is a novel member of the mammalian CRB-MPP5 polarity complex.</title>
        <authorList>
            <person name="Gosens I."/>
            <person name="Sessa A."/>
            <person name="den Hollander A.I."/>
            <person name="Letteboer S.J.F."/>
            <person name="Belloni V."/>
            <person name="Arends M.L."/>
            <person name="Le Bivic A."/>
            <person name="Cremers F.P.M."/>
            <person name="Broccoli V."/>
            <person name="Roepman R."/>
        </authorList>
    </citation>
    <scope>SUBCELLULAR LOCATION</scope>
    <scope>TISSUE SPECIFICITY</scope>
</reference>
<name>E41L5_RAT</name>
<dbReference type="EMBL" id="AABR03085414">
    <property type="status" value="NOT_ANNOTATED_CDS"/>
    <property type="molecule type" value="Genomic_DNA"/>
</dbReference>
<dbReference type="EMBL" id="AABR03085531">
    <property type="status" value="NOT_ANNOTATED_CDS"/>
    <property type="molecule type" value="Genomic_DNA"/>
</dbReference>
<dbReference type="EMBL" id="AABR03086285">
    <property type="status" value="NOT_ANNOTATED_CDS"/>
    <property type="molecule type" value="Genomic_DNA"/>
</dbReference>
<dbReference type="EMBL" id="AABR03086343">
    <property type="status" value="NOT_ANNOTATED_CDS"/>
    <property type="molecule type" value="Genomic_DNA"/>
</dbReference>
<dbReference type="EMBL" id="BC090012">
    <property type="protein sequence ID" value="AAH90012.1"/>
    <property type="molecule type" value="mRNA"/>
</dbReference>
<dbReference type="RefSeq" id="NP_001012023.1">
    <molecule id="Q5FVG2-2"/>
    <property type="nucleotide sequence ID" value="NM_001012023.1"/>
</dbReference>
<dbReference type="RefSeq" id="XP_038946609.1">
    <molecule id="Q5FVG2-2"/>
    <property type="nucleotide sequence ID" value="XM_039090681.2"/>
</dbReference>
<dbReference type="RefSeq" id="XP_063128301.1">
    <molecule id="Q5FVG2-2"/>
    <property type="nucleotide sequence ID" value="XM_063272231.1"/>
</dbReference>
<dbReference type="RefSeq" id="XP_063128302.1">
    <molecule id="Q5FVG2-2"/>
    <property type="nucleotide sequence ID" value="XM_063272232.1"/>
</dbReference>
<dbReference type="RefSeq" id="XP_063128303.1">
    <molecule id="Q5FVG2-2"/>
    <property type="nucleotide sequence ID" value="XM_063272233.1"/>
</dbReference>
<dbReference type="RefSeq" id="XP_063128304.1">
    <molecule id="Q5FVG2-2"/>
    <property type="nucleotide sequence ID" value="XM_063272234.1"/>
</dbReference>
<dbReference type="RefSeq" id="XP_063128305.1">
    <molecule id="Q5FVG2-2"/>
    <property type="nucleotide sequence ID" value="XM_063272235.1"/>
</dbReference>
<dbReference type="SMR" id="Q5FVG2"/>
<dbReference type="FunCoup" id="Q5FVG2">
    <property type="interactions" value="1215"/>
</dbReference>
<dbReference type="STRING" id="10116.ENSRNOP00000045431"/>
<dbReference type="GlyGen" id="Q5FVG2">
    <property type="glycosylation" value="1 site, 1 O-linked glycan (1 site)"/>
</dbReference>
<dbReference type="iPTMnet" id="Q5FVG2"/>
<dbReference type="PhosphoSitePlus" id="Q5FVG2"/>
<dbReference type="PaxDb" id="10116-ENSRNOP00000045431"/>
<dbReference type="Ensembl" id="ENSRNOT00000042862.6">
    <molecule id="Q5FVG2-2"/>
    <property type="protein sequence ID" value="ENSRNOP00000045431.4"/>
    <property type="gene ID" value="ENSRNOG00000002538.9"/>
</dbReference>
<dbReference type="Ensembl" id="ENSRNOT00000111356.1">
    <molecule id="Q5FVG2-1"/>
    <property type="protein sequence ID" value="ENSRNOP00000089466.1"/>
    <property type="gene ID" value="ENSRNOG00000002538.9"/>
</dbReference>
<dbReference type="GeneID" id="304733"/>
<dbReference type="AGR" id="RGD:1311366"/>
<dbReference type="CTD" id="57669"/>
<dbReference type="RGD" id="1311366">
    <property type="gene designation" value="Epb41l5"/>
</dbReference>
<dbReference type="eggNOG" id="KOG3530">
    <property type="taxonomic scope" value="Eukaryota"/>
</dbReference>
<dbReference type="GeneTree" id="ENSGT00940000156332"/>
<dbReference type="HOGENOM" id="CLU_003623_5_1_1"/>
<dbReference type="InParanoid" id="Q5FVG2"/>
<dbReference type="OrthoDB" id="6235974at2759"/>
<dbReference type="Reactome" id="R-RNO-6794361">
    <property type="pathway name" value="Neurexins and neuroligins"/>
</dbReference>
<dbReference type="PRO" id="PR:Q5FVG2"/>
<dbReference type="Proteomes" id="UP000002494">
    <property type="component" value="Chromosome 13"/>
</dbReference>
<dbReference type="Bgee" id="ENSRNOG00000002538">
    <property type="expression patterns" value="Expressed in lung and 18 other cell types or tissues"/>
</dbReference>
<dbReference type="ExpressionAtlas" id="Q5FVG2">
    <property type="expression patterns" value="baseline and differential"/>
</dbReference>
<dbReference type="GO" id="GO:0005912">
    <property type="term" value="C:adherens junction"/>
    <property type="evidence" value="ECO:0007669"/>
    <property type="project" value="UniProtKB-SubCell"/>
</dbReference>
<dbReference type="GO" id="GO:0031252">
    <property type="term" value="C:cell leading edge"/>
    <property type="evidence" value="ECO:0000266"/>
    <property type="project" value="RGD"/>
</dbReference>
<dbReference type="GO" id="GO:0005856">
    <property type="term" value="C:cytoskeleton"/>
    <property type="evidence" value="ECO:0000318"/>
    <property type="project" value="GO_Central"/>
</dbReference>
<dbReference type="GO" id="GO:0005829">
    <property type="term" value="C:cytosol"/>
    <property type="evidence" value="ECO:0007669"/>
    <property type="project" value="Ensembl"/>
</dbReference>
<dbReference type="GO" id="GO:0005925">
    <property type="term" value="C:focal adhesion"/>
    <property type="evidence" value="ECO:0000266"/>
    <property type="project" value="RGD"/>
</dbReference>
<dbReference type="GO" id="GO:0005654">
    <property type="term" value="C:nucleoplasm"/>
    <property type="evidence" value="ECO:0007669"/>
    <property type="project" value="Ensembl"/>
</dbReference>
<dbReference type="GO" id="GO:0001917">
    <property type="term" value="C:photoreceptor inner segment"/>
    <property type="evidence" value="ECO:0007669"/>
    <property type="project" value="UniProtKB-SubCell"/>
</dbReference>
<dbReference type="GO" id="GO:0005886">
    <property type="term" value="C:plasma membrane"/>
    <property type="evidence" value="ECO:0000266"/>
    <property type="project" value="RGD"/>
</dbReference>
<dbReference type="GO" id="GO:0032587">
    <property type="term" value="C:ruffle membrane"/>
    <property type="evidence" value="ECO:0000266"/>
    <property type="project" value="RGD"/>
</dbReference>
<dbReference type="GO" id="GO:0008092">
    <property type="term" value="F:cytoskeletal protein binding"/>
    <property type="evidence" value="ECO:0007669"/>
    <property type="project" value="InterPro"/>
</dbReference>
<dbReference type="GO" id="GO:0019904">
    <property type="term" value="F:protein domain specific binding"/>
    <property type="evidence" value="ECO:0000266"/>
    <property type="project" value="RGD"/>
</dbReference>
<dbReference type="GO" id="GO:0030036">
    <property type="term" value="P:actin cytoskeleton organization"/>
    <property type="evidence" value="ECO:0000266"/>
    <property type="project" value="RGD"/>
</dbReference>
<dbReference type="GO" id="GO:0031032">
    <property type="term" value="P:actomyosin structure organization"/>
    <property type="evidence" value="ECO:0000266"/>
    <property type="project" value="RGD"/>
</dbReference>
<dbReference type="GO" id="GO:0003383">
    <property type="term" value="P:apical constriction"/>
    <property type="evidence" value="ECO:0000266"/>
    <property type="project" value="RGD"/>
</dbReference>
<dbReference type="GO" id="GO:0048318">
    <property type="term" value="P:axial mesoderm development"/>
    <property type="evidence" value="ECO:0000266"/>
    <property type="project" value="RGD"/>
</dbReference>
<dbReference type="GO" id="GO:0048319">
    <property type="term" value="P:axial mesoderm morphogenesis"/>
    <property type="evidence" value="ECO:0000266"/>
    <property type="project" value="RGD"/>
</dbReference>
<dbReference type="GO" id="GO:0000902">
    <property type="term" value="P:cell morphogenesis"/>
    <property type="evidence" value="ECO:0000266"/>
    <property type="project" value="RGD"/>
</dbReference>
<dbReference type="GO" id="GO:0071560">
    <property type="term" value="P:cellular response to transforming growth factor beta stimulus"/>
    <property type="evidence" value="ECO:0000266"/>
    <property type="project" value="RGD"/>
</dbReference>
<dbReference type="GO" id="GO:0007398">
    <property type="term" value="P:ectoderm development"/>
    <property type="evidence" value="ECO:0000266"/>
    <property type="project" value="RGD"/>
</dbReference>
<dbReference type="GO" id="GO:0048617">
    <property type="term" value="P:embryonic foregut morphogenesis"/>
    <property type="evidence" value="ECO:0000266"/>
    <property type="project" value="RGD"/>
</dbReference>
<dbReference type="GO" id="GO:0007492">
    <property type="term" value="P:endoderm development"/>
    <property type="evidence" value="ECO:0000266"/>
    <property type="project" value="RGD"/>
</dbReference>
<dbReference type="GO" id="GO:0003382">
    <property type="term" value="P:epithelial cell morphogenesis"/>
    <property type="evidence" value="ECO:0000266"/>
    <property type="project" value="RGD"/>
</dbReference>
<dbReference type="GO" id="GO:0001837">
    <property type="term" value="P:epithelial to mesenchymal transition"/>
    <property type="evidence" value="ECO:0000266"/>
    <property type="project" value="RGD"/>
</dbReference>
<dbReference type="GO" id="GO:0001701">
    <property type="term" value="P:in utero embryonic development"/>
    <property type="evidence" value="ECO:0000266"/>
    <property type="project" value="RGD"/>
</dbReference>
<dbReference type="GO" id="GO:0070986">
    <property type="term" value="P:left/right axis specification"/>
    <property type="evidence" value="ECO:0000266"/>
    <property type="project" value="RGD"/>
</dbReference>
<dbReference type="GO" id="GO:0007498">
    <property type="term" value="P:mesoderm development"/>
    <property type="evidence" value="ECO:0000266"/>
    <property type="project" value="RGD"/>
</dbReference>
<dbReference type="GO" id="GO:0007509">
    <property type="term" value="P:mesoderm migration involved in gastrulation"/>
    <property type="evidence" value="ECO:0000266"/>
    <property type="project" value="RGD"/>
</dbReference>
<dbReference type="GO" id="GO:0022408">
    <property type="term" value="P:negative regulation of cell-cell adhesion"/>
    <property type="evidence" value="ECO:0000266"/>
    <property type="project" value="RGD"/>
</dbReference>
<dbReference type="GO" id="GO:0001839">
    <property type="term" value="P:neural plate morphogenesis"/>
    <property type="evidence" value="ECO:0000266"/>
    <property type="project" value="RGD"/>
</dbReference>
<dbReference type="GO" id="GO:0048339">
    <property type="term" value="P:paraxial mesoderm development"/>
    <property type="evidence" value="ECO:0000266"/>
    <property type="project" value="RGD"/>
</dbReference>
<dbReference type="GO" id="GO:0001954">
    <property type="term" value="P:positive regulation of cell-matrix adhesion"/>
    <property type="evidence" value="ECO:0000266"/>
    <property type="project" value="RGD"/>
</dbReference>
<dbReference type="GO" id="GO:0010634">
    <property type="term" value="P:positive regulation of epithelial cell migration"/>
    <property type="evidence" value="ECO:0000266"/>
    <property type="project" value="RGD"/>
</dbReference>
<dbReference type="GO" id="GO:0051894">
    <property type="term" value="P:positive regulation of focal adhesion assembly"/>
    <property type="evidence" value="ECO:0000266"/>
    <property type="project" value="RGD"/>
</dbReference>
<dbReference type="GO" id="GO:0010608">
    <property type="term" value="P:post-transcriptional regulation of gene expression"/>
    <property type="evidence" value="ECO:0000266"/>
    <property type="project" value="RGD"/>
</dbReference>
<dbReference type="GO" id="GO:0070201">
    <property type="term" value="P:regulation of establishment of protein localization"/>
    <property type="evidence" value="ECO:0000266"/>
    <property type="project" value="RGD"/>
</dbReference>
<dbReference type="GO" id="GO:0032525">
    <property type="term" value="P:somite rostral/caudal axis specification"/>
    <property type="evidence" value="ECO:0000266"/>
    <property type="project" value="RGD"/>
</dbReference>
<dbReference type="GO" id="GO:0001756">
    <property type="term" value="P:somitogenesis"/>
    <property type="evidence" value="ECO:0000266"/>
    <property type="project" value="RGD"/>
</dbReference>
<dbReference type="GO" id="GO:0006931">
    <property type="term" value="P:substrate-dependent cell migration, cell attachment to substrate"/>
    <property type="evidence" value="ECO:0000266"/>
    <property type="project" value="RGD"/>
</dbReference>
<dbReference type="GO" id="GO:0009826">
    <property type="term" value="P:unidimensional cell growth"/>
    <property type="evidence" value="ECO:0000266"/>
    <property type="project" value="RGD"/>
</dbReference>
<dbReference type="CDD" id="cd14473">
    <property type="entry name" value="FERM_B-lobe"/>
    <property type="match status" value="1"/>
</dbReference>
<dbReference type="CDD" id="cd13186">
    <property type="entry name" value="FERM_C_NBL4_NBL5"/>
    <property type="match status" value="1"/>
</dbReference>
<dbReference type="FunFam" id="2.30.29.30:FF:000002">
    <property type="entry name" value="Band 4.1-like protein 5 isoform 1"/>
    <property type="match status" value="1"/>
</dbReference>
<dbReference type="FunFam" id="3.10.20.90:FF:000024">
    <property type="entry name" value="Erythrocyte membrane protein band 4.1-like 5"/>
    <property type="match status" value="1"/>
</dbReference>
<dbReference type="FunFam" id="1.20.80.10:FF:000003">
    <property type="entry name" value="Tyrosine-protein phosphatase non-receptor type 4"/>
    <property type="match status" value="1"/>
</dbReference>
<dbReference type="Gene3D" id="1.20.80.10">
    <property type="match status" value="1"/>
</dbReference>
<dbReference type="Gene3D" id="3.10.20.90">
    <property type="entry name" value="Phosphatidylinositol 3-kinase Catalytic Subunit, Chain A, domain 1"/>
    <property type="match status" value="1"/>
</dbReference>
<dbReference type="Gene3D" id="2.30.29.30">
    <property type="entry name" value="Pleckstrin-homology domain (PH domain)/Phosphotyrosine-binding domain (PTB)"/>
    <property type="match status" value="1"/>
</dbReference>
<dbReference type="InterPro" id="IPR019749">
    <property type="entry name" value="Band_41_domain"/>
</dbReference>
<dbReference type="InterPro" id="IPR000798">
    <property type="entry name" value="Ez/rad/moesin-like"/>
</dbReference>
<dbReference type="InterPro" id="IPR014847">
    <property type="entry name" value="FA"/>
</dbReference>
<dbReference type="InterPro" id="IPR014352">
    <property type="entry name" value="FERM/acyl-CoA-bd_prot_sf"/>
</dbReference>
<dbReference type="InterPro" id="IPR035963">
    <property type="entry name" value="FERM_2"/>
</dbReference>
<dbReference type="InterPro" id="IPR019748">
    <property type="entry name" value="FERM_central"/>
</dbReference>
<dbReference type="InterPro" id="IPR019747">
    <property type="entry name" value="FERM_CS"/>
</dbReference>
<dbReference type="InterPro" id="IPR000299">
    <property type="entry name" value="FERM_domain"/>
</dbReference>
<dbReference type="InterPro" id="IPR018979">
    <property type="entry name" value="FERM_N"/>
</dbReference>
<dbReference type="InterPro" id="IPR018980">
    <property type="entry name" value="FERM_PH-like_C"/>
</dbReference>
<dbReference type="InterPro" id="IPR011993">
    <property type="entry name" value="PH-like_dom_sf"/>
</dbReference>
<dbReference type="InterPro" id="IPR029071">
    <property type="entry name" value="Ubiquitin-like_domsf"/>
</dbReference>
<dbReference type="PANTHER" id="PTHR23280">
    <property type="entry name" value="4.1 G PROTEIN"/>
    <property type="match status" value="1"/>
</dbReference>
<dbReference type="PANTHER" id="PTHR23280:SF15">
    <property type="entry name" value="BAND 4.1-LIKE PROTEIN 5"/>
    <property type="match status" value="1"/>
</dbReference>
<dbReference type="Pfam" id="PF08736">
    <property type="entry name" value="FA"/>
    <property type="match status" value="1"/>
</dbReference>
<dbReference type="Pfam" id="PF09380">
    <property type="entry name" value="FERM_C"/>
    <property type="match status" value="1"/>
</dbReference>
<dbReference type="Pfam" id="PF00373">
    <property type="entry name" value="FERM_M"/>
    <property type="match status" value="1"/>
</dbReference>
<dbReference type="Pfam" id="PF09379">
    <property type="entry name" value="FERM_N"/>
    <property type="match status" value="1"/>
</dbReference>
<dbReference type="PRINTS" id="PR00935">
    <property type="entry name" value="BAND41"/>
</dbReference>
<dbReference type="PRINTS" id="PR00661">
    <property type="entry name" value="ERMFAMILY"/>
</dbReference>
<dbReference type="SMART" id="SM00295">
    <property type="entry name" value="B41"/>
    <property type="match status" value="1"/>
</dbReference>
<dbReference type="SMART" id="SM01195">
    <property type="entry name" value="FA"/>
    <property type="match status" value="1"/>
</dbReference>
<dbReference type="SMART" id="SM01196">
    <property type="entry name" value="FERM_C"/>
    <property type="match status" value="1"/>
</dbReference>
<dbReference type="SUPFAM" id="SSF50729">
    <property type="entry name" value="PH domain-like"/>
    <property type="match status" value="1"/>
</dbReference>
<dbReference type="SUPFAM" id="SSF47031">
    <property type="entry name" value="Second domain of FERM"/>
    <property type="match status" value="1"/>
</dbReference>
<dbReference type="SUPFAM" id="SSF54236">
    <property type="entry name" value="Ubiquitin-like"/>
    <property type="match status" value="1"/>
</dbReference>
<dbReference type="PROSITE" id="PS00660">
    <property type="entry name" value="FERM_1"/>
    <property type="match status" value="1"/>
</dbReference>
<dbReference type="PROSITE" id="PS00661">
    <property type="entry name" value="FERM_2"/>
    <property type="match status" value="1"/>
</dbReference>
<dbReference type="PROSITE" id="PS50057">
    <property type="entry name" value="FERM_3"/>
    <property type="match status" value="1"/>
</dbReference>
<comment type="function">
    <text evidence="2">Plays a role in the formation and organization of tight junctions during the establishment of polarity in epithelial cells.</text>
</comment>
<comment type="subunit">
    <text evidence="2">Component of a complex composed of PALS1, CRB1 and EPB41L5 (By similarity). Within the complex, interacts (via FERM domain) with PALS1 (via HOOK domain) and with CRB1 (via intracellular domain) (By similarity). Interacts with CRB2 (via intracellular domain) (By similarity). Interacts with CRB3 (via intracellular domain) (By similarity).</text>
</comment>
<comment type="subcellular location">
    <subcellularLocation>
        <location evidence="1">Cytoplasm</location>
    </subcellularLocation>
    <subcellularLocation>
        <location evidence="1">Cell junction</location>
        <location evidence="1">Adherens junction</location>
    </subcellularLocation>
    <subcellularLocation>
        <location evidence="1">Cell membrane</location>
        <topology evidence="7">Peripheral membrane protein</topology>
    </subcellularLocation>
    <subcellularLocation>
        <location evidence="5">Photoreceptor inner segment</location>
    </subcellularLocation>
</comment>
<comment type="alternative products">
    <event type="alternative splicing"/>
    <isoform>
        <id>Q5FVG2-1</id>
        <name>1</name>
        <sequence type="displayed"/>
    </isoform>
    <isoform>
        <id>Q5FVG2-2</id>
        <name>2</name>
        <sequence type="described" ref="VSP_033042 VSP_033043 VSP_033044"/>
    </isoform>
</comment>
<comment type="tissue specificity">
    <text evidence="5">Expressed in the outer limiting membrane, retinal pigment epithelium, outer nuclear layer and outer plexiform layer of the retina (at protein level).</text>
</comment>
<keyword id="KW-0025">Alternative splicing</keyword>
<keyword id="KW-0965">Cell junction</keyword>
<keyword id="KW-1003">Cell membrane</keyword>
<keyword id="KW-0963">Cytoplasm</keyword>
<keyword id="KW-0472">Membrane</keyword>
<keyword id="KW-1185">Reference proteome</keyword>
<evidence type="ECO:0000250" key="1">
    <source>
        <dbReference type="UniProtKB" id="Q8BGS1"/>
    </source>
</evidence>
<evidence type="ECO:0000250" key="2">
    <source>
        <dbReference type="UniProtKB" id="Q9HCM4"/>
    </source>
</evidence>
<evidence type="ECO:0000255" key="3">
    <source>
        <dbReference type="PROSITE-ProRule" id="PRU00084"/>
    </source>
</evidence>
<evidence type="ECO:0000256" key="4">
    <source>
        <dbReference type="SAM" id="MobiDB-lite"/>
    </source>
</evidence>
<evidence type="ECO:0000269" key="5">
    <source>
    </source>
</evidence>
<evidence type="ECO:0000303" key="6">
    <source>
    </source>
</evidence>
<evidence type="ECO:0000305" key="7"/>
<evidence type="ECO:0000312" key="8">
    <source>
        <dbReference type="RGD" id="1311366"/>
    </source>
</evidence>
<feature type="chain" id="PRO_0000330356" description="Band 4.1-like protein 5">
    <location>
        <begin position="1"/>
        <end position="731"/>
    </location>
</feature>
<feature type="domain" description="FERM" evidence="3">
    <location>
        <begin position="43"/>
        <end position="327"/>
    </location>
</feature>
<feature type="region of interest" description="Required for interaction with CRB1" evidence="2">
    <location>
        <begin position="29"/>
        <end position="119"/>
    </location>
</feature>
<feature type="region of interest" description="Disordered" evidence="4">
    <location>
        <begin position="356"/>
        <end position="375"/>
    </location>
</feature>
<feature type="region of interest" description="Disordered" evidence="4">
    <location>
        <begin position="396"/>
        <end position="422"/>
    </location>
</feature>
<feature type="compositionally biased region" description="Polar residues" evidence="4">
    <location>
        <begin position="396"/>
        <end position="407"/>
    </location>
</feature>
<feature type="splice variant" id="VSP_033042" description="In isoform 2." evidence="6">
    <original>GEVWPCSTGS</original>
    <variation>ASTAKPDDLG</variation>
    <location>
        <begin position="384"/>
        <end position="393"/>
    </location>
</feature>
<feature type="splice variant" id="VSP_033043" description="In isoform 2." evidence="6">
    <original>PLSIDLLNSPDLLETTIGDVTRPSDTSAPFPAPDDVNVATMSHELEELRADCETLKDD</original>
    <variation>SATSDRCQRGGHQWNPRALPPPQTAYRNYTDFVHEHNVKNAGAHHDAHLAGRAAMTDI</variation>
    <location>
        <begin position="447"/>
        <end position="504"/>
    </location>
</feature>
<feature type="splice variant" id="VSP_033044" description="In isoform 2." evidence="6">
    <location>
        <begin position="505"/>
        <end position="731"/>
    </location>
</feature>